<name>ALR_SHIDS</name>
<evidence type="ECO:0000255" key="1">
    <source>
        <dbReference type="HAMAP-Rule" id="MF_01201"/>
    </source>
</evidence>
<organism>
    <name type="scientific">Shigella dysenteriae serotype 1 (strain Sd197)</name>
    <dbReference type="NCBI Taxonomy" id="300267"/>
    <lineage>
        <taxon>Bacteria</taxon>
        <taxon>Pseudomonadati</taxon>
        <taxon>Pseudomonadota</taxon>
        <taxon>Gammaproteobacteria</taxon>
        <taxon>Enterobacterales</taxon>
        <taxon>Enterobacteriaceae</taxon>
        <taxon>Shigella</taxon>
    </lineage>
</organism>
<sequence length="359" mass="39165">MQAATVVINRRALRHNLQRLRELAPASKMVAVVKANAYGHGLLETARTLPDADAFGVARLEEALRLRAGGITKPVLLLEGFFDARDLPTISAQHFHTAVHNEEQLAALEEASLDEPVTVWMKLDTGMHRLGVRPEQAEAFYHRLTQCKNVRQPVNIVSHFARADEPKCGATEKQLAIFNTFCEGKPGQRSIAASGGILLWPQSHFDWVRPGIILYGVSPLEDRSTGADFGCQPVMSLTSSLIAVREHKVGEPVGYGGTWISERDTRLGVVAMGYGDGYPRAAPSGTPVLVNGREVPIVGRVAMDMICVDLGPQAQDKAGDPVILWGEGLPVERIAEMTKVSAYELIARLTSRVAMKYVD</sequence>
<accession>Q327W0</accession>
<protein>
    <recommendedName>
        <fullName evidence="1">Alanine racemase</fullName>
        <ecNumber evidence="1">5.1.1.1</ecNumber>
    </recommendedName>
</protein>
<reference key="1">
    <citation type="journal article" date="2005" name="Nucleic Acids Res.">
        <title>Genome dynamics and diversity of Shigella species, the etiologic agents of bacillary dysentery.</title>
        <authorList>
            <person name="Yang F."/>
            <person name="Yang J."/>
            <person name="Zhang X."/>
            <person name="Chen L."/>
            <person name="Jiang Y."/>
            <person name="Yan Y."/>
            <person name="Tang X."/>
            <person name="Wang J."/>
            <person name="Xiong Z."/>
            <person name="Dong J."/>
            <person name="Xue Y."/>
            <person name="Zhu Y."/>
            <person name="Xu X."/>
            <person name="Sun L."/>
            <person name="Chen S."/>
            <person name="Nie H."/>
            <person name="Peng J."/>
            <person name="Xu J."/>
            <person name="Wang Y."/>
            <person name="Yuan Z."/>
            <person name="Wen Y."/>
            <person name="Yao Z."/>
            <person name="Shen Y."/>
            <person name="Qiang B."/>
            <person name="Hou Y."/>
            <person name="Yu J."/>
            <person name="Jin Q."/>
        </authorList>
    </citation>
    <scope>NUCLEOTIDE SEQUENCE [LARGE SCALE GENOMIC DNA]</scope>
    <source>
        <strain>Sd197</strain>
    </source>
</reference>
<comment type="function">
    <text evidence="1">Catalyzes the interconversion of L-alanine and D-alanine. May also act on other amino acids.</text>
</comment>
<comment type="catalytic activity">
    <reaction evidence="1">
        <text>L-alanine = D-alanine</text>
        <dbReference type="Rhea" id="RHEA:20249"/>
        <dbReference type="ChEBI" id="CHEBI:57416"/>
        <dbReference type="ChEBI" id="CHEBI:57972"/>
        <dbReference type="EC" id="5.1.1.1"/>
    </reaction>
</comment>
<comment type="cofactor">
    <cofactor evidence="1">
        <name>pyridoxal 5'-phosphate</name>
        <dbReference type="ChEBI" id="CHEBI:597326"/>
    </cofactor>
</comment>
<comment type="pathway">
    <text evidence="1">Amino-acid biosynthesis; D-alanine biosynthesis; D-alanine from L-alanine: step 1/1.</text>
</comment>
<comment type="similarity">
    <text evidence="1">Belongs to the alanine racemase family.</text>
</comment>
<gene>
    <name type="primary">alr</name>
    <name type="ordered locus">SDY_4521</name>
</gene>
<keyword id="KW-0413">Isomerase</keyword>
<keyword id="KW-0663">Pyridoxal phosphate</keyword>
<keyword id="KW-1185">Reference proteome</keyword>
<dbReference type="EC" id="5.1.1.1" evidence="1"/>
<dbReference type="EMBL" id="CP000034">
    <property type="protein sequence ID" value="ABB64395.1"/>
    <property type="molecule type" value="Genomic_DNA"/>
</dbReference>
<dbReference type="RefSeq" id="WP_001147331.1">
    <property type="nucleotide sequence ID" value="NC_007606.1"/>
</dbReference>
<dbReference type="RefSeq" id="YP_405886.1">
    <property type="nucleotide sequence ID" value="NC_007606.1"/>
</dbReference>
<dbReference type="SMR" id="Q327W0"/>
<dbReference type="STRING" id="300267.SDY_4521"/>
<dbReference type="EnsemblBacteria" id="ABB64395">
    <property type="protein sequence ID" value="ABB64395"/>
    <property type="gene ID" value="SDY_4521"/>
</dbReference>
<dbReference type="KEGG" id="sdy:SDY_4521"/>
<dbReference type="PATRIC" id="fig|300267.13.peg.5344"/>
<dbReference type="HOGENOM" id="CLU_028393_1_0_6"/>
<dbReference type="UniPathway" id="UPA00042">
    <property type="reaction ID" value="UER00497"/>
</dbReference>
<dbReference type="Proteomes" id="UP000002716">
    <property type="component" value="Chromosome"/>
</dbReference>
<dbReference type="GO" id="GO:0005829">
    <property type="term" value="C:cytosol"/>
    <property type="evidence" value="ECO:0007669"/>
    <property type="project" value="TreeGrafter"/>
</dbReference>
<dbReference type="GO" id="GO:0008784">
    <property type="term" value="F:alanine racemase activity"/>
    <property type="evidence" value="ECO:0007669"/>
    <property type="project" value="UniProtKB-UniRule"/>
</dbReference>
<dbReference type="GO" id="GO:0030170">
    <property type="term" value="F:pyridoxal phosphate binding"/>
    <property type="evidence" value="ECO:0007669"/>
    <property type="project" value="UniProtKB-UniRule"/>
</dbReference>
<dbReference type="GO" id="GO:0030632">
    <property type="term" value="P:D-alanine biosynthetic process"/>
    <property type="evidence" value="ECO:0007669"/>
    <property type="project" value="UniProtKB-UniRule"/>
</dbReference>
<dbReference type="CDD" id="cd06827">
    <property type="entry name" value="PLPDE_III_AR_proteobact"/>
    <property type="match status" value="1"/>
</dbReference>
<dbReference type="FunFam" id="2.40.37.10:FF:000002">
    <property type="entry name" value="Alanine racemase"/>
    <property type="match status" value="1"/>
</dbReference>
<dbReference type="FunFam" id="3.20.20.10:FF:000002">
    <property type="entry name" value="Alanine racemase"/>
    <property type="match status" value="1"/>
</dbReference>
<dbReference type="Gene3D" id="3.20.20.10">
    <property type="entry name" value="Alanine racemase"/>
    <property type="match status" value="1"/>
</dbReference>
<dbReference type="Gene3D" id="2.40.37.10">
    <property type="entry name" value="Lyase, Ornithine Decarboxylase, Chain A, domain 1"/>
    <property type="match status" value="1"/>
</dbReference>
<dbReference type="HAMAP" id="MF_01201">
    <property type="entry name" value="Ala_racemase"/>
    <property type="match status" value="1"/>
</dbReference>
<dbReference type="InterPro" id="IPR000821">
    <property type="entry name" value="Ala_racemase"/>
</dbReference>
<dbReference type="InterPro" id="IPR009006">
    <property type="entry name" value="Ala_racemase/Decarboxylase_C"/>
</dbReference>
<dbReference type="InterPro" id="IPR011079">
    <property type="entry name" value="Ala_racemase_C"/>
</dbReference>
<dbReference type="InterPro" id="IPR001608">
    <property type="entry name" value="Ala_racemase_N"/>
</dbReference>
<dbReference type="InterPro" id="IPR020622">
    <property type="entry name" value="Ala_racemase_pyridoxalP-BS"/>
</dbReference>
<dbReference type="InterPro" id="IPR029066">
    <property type="entry name" value="PLP-binding_barrel"/>
</dbReference>
<dbReference type="NCBIfam" id="TIGR00492">
    <property type="entry name" value="alr"/>
    <property type="match status" value="1"/>
</dbReference>
<dbReference type="PANTHER" id="PTHR30511">
    <property type="entry name" value="ALANINE RACEMASE"/>
    <property type="match status" value="1"/>
</dbReference>
<dbReference type="PANTHER" id="PTHR30511:SF4">
    <property type="entry name" value="ALANINE RACEMASE, BIOSYNTHETIC"/>
    <property type="match status" value="1"/>
</dbReference>
<dbReference type="Pfam" id="PF00842">
    <property type="entry name" value="Ala_racemase_C"/>
    <property type="match status" value="1"/>
</dbReference>
<dbReference type="Pfam" id="PF01168">
    <property type="entry name" value="Ala_racemase_N"/>
    <property type="match status" value="1"/>
</dbReference>
<dbReference type="PRINTS" id="PR00992">
    <property type="entry name" value="ALARACEMASE"/>
</dbReference>
<dbReference type="SMART" id="SM01005">
    <property type="entry name" value="Ala_racemase_C"/>
    <property type="match status" value="1"/>
</dbReference>
<dbReference type="SUPFAM" id="SSF50621">
    <property type="entry name" value="Alanine racemase C-terminal domain-like"/>
    <property type="match status" value="1"/>
</dbReference>
<dbReference type="SUPFAM" id="SSF51419">
    <property type="entry name" value="PLP-binding barrel"/>
    <property type="match status" value="1"/>
</dbReference>
<dbReference type="PROSITE" id="PS00395">
    <property type="entry name" value="ALANINE_RACEMASE"/>
    <property type="match status" value="1"/>
</dbReference>
<proteinExistence type="inferred from homology"/>
<feature type="chain" id="PRO_1000066038" description="Alanine racemase">
    <location>
        <begin position="1"/>
        <end position="359"/>
    </location>
</feature>
<feature type="active site" description="Proton acceptor; specific for D-alanine" evidence="1">
    <location>
        <position position="34"/>
    </location>
</feature>
<feature type="active site" description="Proton acceptor; specific for L-alanine" evidence="1">
    <location>
        <position position="255"/>
    </location>
</feature>
<feature type="binding site" evidence="1">
    <location>
        <position position="129"/>
    </location>
    <ligand>
        <name>substrate</name>
    </ligand>
</feature>
<feature type="binding site" evidence="1">
    <location>
        <position position="303"/>
    </location>
    <ligand>
        <name>substrate</name>
    </ligand>
</feature>
<feature type="modified residue" description="N6-(pyridoxal phosphate)lysine" evidence="1">
    <location>
        <position position="34"/>
    </location>
</feature>